<comment type="function">
    <text evidence="1">Catalyzes the formation of sulfite from phosphoadenosine 5'-phosphosulfate (PAPS) using thioredoxin as an electron donor.</text>
</comment>
<comment type="catalytic activity">
    <reaction evidence="1">
        <text>[thioredoxin]-disulfide + sulfite + adenosine 3',5'-bisphosphate + 2 H(+) = [thioredoxin]-dithiol + 3'-phosphoadenylyl sulfate</text>
        <dbReference type="Rhea" id="RHEA:11724"/>
        <dbReference type="Rhea" id="RHEA-COMP:10698"/>
        <dbReference type="Rhea" id="RHEA-COMP:10700"/>
        <dbReference type="ChEBI" id="CHEBI:15378"/>
        <dbReference type="ChEBI" id="CHEBI:17359"/>
        <dbReference type="ChEBI" id="CHEBI:29950"/>
        <dbReference type="ChEBI" id="CHEBI:50058"/>
        <dbReference type="ChEBI" id="CHEBI:58339"/>
        <dbReference type="ChEBI" id="CHEBI:58343"/>
        <dbReference type="EC" id="1.8.4.8"/>
    </reaction>
</comment>
<comment type="pathway">
    <text evidence="1">Sulfur metabolism; hydrogen sulfide biosynthesis; sulfite from sulfate: step 3/3.</text>
</comment>
<comment type="subcellular location">
    <subcellularLocation>
        <location evidence="1">Cytoplasm</location>
    </subcellularLocation>
</comment>
<comment type="similarity">
    <text evidence="1">Belongs to the PAPS reductase family. CysH subfamily.</text>
</comment>
<name>CYSH_PHOLL</name>
<organism>
    <name type="scientific">Photorhabdus laumondii subsp. laumondii (strain DSM 15139 / CIP 105565 / TT01)</name>
    <name type="common">Photorhabdus luminescens subsp. laumondii</name>
    <dbReference type="NCBI Taxonomy" id="243265"/>
    <lineage>
        <taxon>Bacteria</taxon>
        <taxon>Pseudomonadati</taxon>
        <taxon>Pseudomonadota</taxon>
        <taxon>Gammaproteobacteria</taxon>
        <taxon>Enterobacterales</taxon>
        <taxon>Morganellaceae</taxon>
        <taxon>Photorhabdus</taxon>
    </lineage>
</organism>
<protein>
    <recommendedName>
        <fullName evidence="1">Phosphoadenosine 5'-phosphosulfate reductase</fullName>
        <shortName evidence="1">PAPS reductase</shortName>
        <ecNumber evidence="1">1.8.4.8</ecNumber>
    </recommendedName>
    <alternativeName>
        <fullName evidence="1">3'-phosphoadenylylsulfate reductase</fullName>
    </alternativeName>
    <alternativeName>
        <fullName evidence="1">PAPS reductase, thioredoxin dependent</fullName>
    </alternativeName>
    <alternativeName>
        <fullName evidence="1">PAPS sulfotransferase</fullName>
    </alternativeName>
    <alternativeName>
        <fullName evidence="1">PAdoPS reductase</fullName>
    </alternativeName>
</protein>
<keyword id="KW-0963">Cytoplasm</keyword>
<keyword id="KW-0560">Oxidoreductase</keyword>
<keyword id="KW-1185">Reference proteome</keyword>
<evidence type="ECO:0000255" key="1">
    <source>
        <dbReference type="HAMAP-Rule" id="MF_00063"/>
    </source>
</evidence>
<dbReference type="EC" id="1.8.4.8" evidence="1"/>
<dbReference type="EMBL" id="BX571861">
    <property type="protein sequence ID" value="CAE13000.1"/>
    <property type="molecule type" value="Genomic_DNA"/>
</dbReference>
<dbReference type="RefSeq" id="WP_011145081.1">
    <property type="nucleotide sequence ID" value="NC_005126.1"/>
</dbReference>
<dbReference type="SMR" id="Q7MB85"/>
<dbReference type="STRING" id="243265.plu0705"/>
<dbReference type="GeneID" id="48847000"/>
<dbReference type="KEGG" id="plu:plu0705"/>
<dbReference type="eggNOG" id="COG0175">
    <property type="taxonomic scope" value="Bacteria"/>
</dbReference>
<dbReference type="HOGENOM" id="CLU_044089_3_0_6"/>
<dbReference type="OrthoDB" id="9794018at2"/>
<dbReference type="UniPathway" id="UPA00140">
    <property type="reaction ID" value="UER00206"/>
</dbReference>
<dbReference type="Proteomes" id="UP000002514">
    <property type="component" value="Chromosome"/>
</dbReference>
<dbReference type="GO" id="GO:0005737">
    <property type="term" value="C:cytoplasm"/>
    <property type="evidence" value="ECO:0007669"/>
    <property type="project" value="UniProtKB-SubCell"/>
</dbReference>
<dbReference type="GO" id="GO:0004604">
    <property type="term" value="F:phosphoadenylyl-sulfate reductase (thioredoxin) activity"/>
    <property type="evidence" value="ECO:0007669"/>
    <property type="project" value="UniProtKB-UniRule"/>
</dbReference>
<dbReference type="GO" id="GO:0070814">
    <property type="term" value="P:hydrogen sulfide biosynthetic process"/>
    <property type="evidence" value="ECO:0007669"/>
    <property type="project" value="UniProtKB-UniRule"/>
</dbReference>
<dbReference type="GO" id="GO:0019379">
    <property type="term" value="P:sulfate assimilation, phosphoadenylyl sulfate reduction by phosphoadenylyl-sulfate reductase (thioredoxin)"/>
    <property type="evidence" value="ECO:0007669"/>
    <property type="project" value="UniProtKB-UniRule"/>
</dbReference>
<dbReference type="CDD" id="cd23945">
    <property type="entry name" value="PAPS_reductase"/>
    <property type="match status" value="1"/>
</dbReference>
<dbReference type="FunFam" id="3.40.50.620:FF:000043">
    <property type="entry name" value="Phosphoadenosine phosphosulfate reductase"/>
    <property type="match status" value="1"/>
</dbReference>
<dbReference type="Gene3D" id="3.40.50.620">
    <property type="entry name" value="HUPs"/>
    <property type="match status" value="1"/>
</dbReference>
<dbReference type="HAMAP" id="MF_00063">
    <property type="entry name" value="CysH"/>
    <property type="match status" value="1"/>
</dbReference>
<dbReference type="InterPro" id="IPR004511">
    <property type="entry name" value="PAPS/APS_Rdtase"/>
</dbReference>
<dbReference type="InterPro" id="IPR002500">
    <property type="entry name" value="PAPS_reduct_dom"/>
</dbReference>
<dbReference type="InterPro" id="IPR011800">
    <property type="entry name" value="PAPS_reductase_CysH"/>
</dbReference>
<dbReference type="InterPro" id="IPR014729">
    <property type="entry name" value="Rossmann-like_a/b/a_fold"/>
</dbReference>
<dbReference type="NCBIfam" id="TIGR00434">
    <property type="entry name" value="cysH"/>
    <property type="match status" value="1"/>
</dbReference>
<dbReference type="NCBIfam" id="TIGR02057">
    <property type="entry name" value="PAPS_reductase"/>
    <property type="match status" value="1"/>
</dbReference>
<dbReference type="NCBIfam" id="NF002537">
    <property type="entry name" value="PRK02090.1"/>
    <property type="match status" value="1"/>
</dbReference>
<dbReference type="PANTHER" id="PTHR46509">
    <property type="entry name" value="PHOSPHOADENOSINE PHOSPHOSULFATE REDUCTASE"/>
    <property type="match status" value="1"/>
</dbReference>
<dbReference type="PANTHER" id="PTHR46509:SF1">
    <property type="entry name" value="PHOSPHOADENOSINE PHOSPHOSULFATE REDUCTASE"/>
    <property type="match status" value="1"/>
</dbReference>
<dbReference type="Pfam" id="PF01507">
    <property type="entry name" value="PAPS_reduct"/>
    <property type="match status" value="1"/>
</dbReference>
<dbReference type="PIRSF" id="PIRSF000857">
    <property type="entry name" value="PAPS_reductase"/>
    <property type="match status" value="1"/>
</dbReference>
<dbReference type="SUPFAM" id="SSF52402">
    <property type="entry name" value="Adenine nucleotide alpha hydrolases-like"/>
    <property type="match status" value="1"/>
</dbReference>
<accession>Q7MB85</accession>
<sequence>MSQFSLSQCVSMTAEQQEQSLAEINLRLEMMDAHQRVNWALENLPGEFVLSSSFGIQAAVCLHLVTQEYPDIPVILTDTGYLFPETYQFIDKLTTQLKLNLQVFSAEHSPAWQEARYGKLWEQGVEGIERYNQINKVEPMNRALKNLRAQSWFAGLRRQQSESRSKLPVLAVQRGVFKILPIIDWDNRRVHQYLTKHGLEYHPLWEQGYLSVGDIHTTQKWEPGMSEEQTRFFGLKRECGLHEN</sequence>
<gene>
    <name evidence="1" type="primary">cysH</name>
    <name type="ordered locus">plu0705</name>
</gene>
<feature type="chain" id="PRO_0000100637" description="Phosphoadenosine 5'-phosphosulfate reductase">
    <location>
        <begin position="1"/>
        <end position="244"/>
    </location>
</feature>
<feature type="active site" description="Nucleophile; cysteine thiosulfonate intermediate" evidence="1">
    <location>
        <position position="239"/>
    </location>
</feature>
<proteinExistence type="inferred from homology"/>
<reference key="1">
    <citation type="journal article" date="2003" name="Nat. Biotechnol.">
        <title>The genome sequence of the entomopathogenic bacterium Photorhabdus luminescens.</title>
        <authorList>
            <person name="Duchaud E."/>
            <person name="Rusniok C."/>
            <person name="Frangeul L."/>
            <person name="Buchrieser C."/>
            <person name="Givaudan A."/>
            <person name="Taourit S."/>
            <person name="Bocs S."/>
            <person name="Boursaux-Eude C."/>
            <person name="Chandler M."/>
            <person name="Charles J.-F."/>
            <person name="Dassa E."/>
            <person name="Derose R."/>
            <person name="Derzelle S."/>
            <person name="Freyssinet G."/>
            <person name="Gaudriault S."/>
            <person name="Medigue C."/>
            <person name="Lanois A."/>
            <person name="Powell K."/>
            <person name="Siguier P."/>
            <person name="Vincent R."/>
            <person name="Wingate V."/>
            <person name="Zouine M."/>
            <person name="Glaser P."/>
            <person name="Boemare N."/>
            <person name="Danchin A."/>
            <person name="Kunst F."/>
        </authorList>
    </citation>
    <scope>NUCLEOTIDE SEQUENCE [LARGE SCALE GENOMIC DNA]</scope>
    <source>
        <strain>DSM 15139 / CIP 105565 / TT01</strain>
    </source>
</reference>